<reference key="1">
    <citation type="journal article" date="2008" name="Biol. Direct">
        <title>Complete genome sequence of the extremely acidophilic methanotroph isolate V4, Methylacidiphilum infernorum, a representative of the bacterial phylum Verrucomicrobia.</title>
        <authorList>
            <person name="Hou S."/>
            <person name="Makarova K.S."/>
            <person name="Saw J.H."/>
            <person name="Senin P."/>
            <person name="Ly B.V."/>
            <person name="Zhou Z."/>
            <person name="Ren Y."/>
            <person name="Wang J."/>
            <person name="Galperin M.Y."/>
            <person name="Omelchenko M.V."/>
            <person name="Wolf Y.I."/>
            <person name="Yutin N."/>
            <person name="Koonin E.V."/>
            <person name="Stott M.B."/>
            <person name="Mountain B.W."/>
            <person name="Crowe M.A."/>
            <person name="Smirnova A.V."/>
            <person name="Dunfield P.F."/>
            <person name="Feng L."/>
            <person name="Wang L."/>
            <person name="Alam M."/>
        </authorList>
    </citation>
    <scope>NUCLEOTIDE SEQUENCE [LARGE SCALE GENOMIC DNA]</scope>
    <source>
        <strain>Isolate V4</strain>
    </source>
</reference>
<protein>
    <recommendedName>
        <fullName evidence="1">Translation initiation factor IF-3</fullName>
    </recommendedName>
</protein>
<evidence type="ECO:0000255" key="1">
    <source>
        <dbReference type="HAMAP-Rule" id="MF_00080"/>
    </source>
</evidence>
<evidence type="ECO:0000256" key="2">
    <source>
        <dbReference type="SAM" id="MobiDB-lite"/>
    </source>
</evidence>
<gene>
    <name evidence="1" type="primary">infC</name>
    <name type="ordered locus">Minf_1975</name>
</gene>
<keyword id="KW-0963">Cytoplasm</keyword>
<keyword id="KW-0396">Initiation factor</keyword>
<keyword id="KW-0648">Protein biosynthesis</keyword>
<sequence>MHPSSRFHSNKKTFVRINNAIRAKEVLVIDSTGKSLGVLPIQEAQQRAQQQGLDLVEVSPHAHPPVCKILDYGKFKYSLSKKEKDSKKGATKLKEIQLHVNINEHDFLIKLKQAEAFMAKGMKVKFNLFLRGREITHQDLALNLMNRLIKELAHVGQTDQEPKLAGRNISLTFTPLPANKRLLKYNLPETETTRIREENREKQKEKENTSKEGNKDA</sequence>
<organism>
    <name type="scientific">Methylacidiphilum infernorum (isolate V4)</name>
    <name type="common">Methylokorus infernorum (strain V4)</name>
    <dbReference type="NCBI Taxonomy" id="481448"/>
    <lineage>
        <taxon>Bacteria</taxon>
        <taxon>Pseudomonadati</taxon>
        <taxon>Verrucomicrobiota</taxon>
        <taxon>Methylacidiphilae</taxon>
        <taxon>Methylacidiphilales</taxon>
        <taxon>Methylacidiphilaceae</taxon>
        <taxon>Methylacidiphilum (ex Ratnadevi et al. 2023)</taxon>
    </lineage>
</organism>
<dbReference type="EMBL" id="CP000975">
    <property type="protein sequence ID" value="ACD84029.1"/>
    <property type="molecule type" value="Genomic_DNA"/>
</dbReference>
<dbReference type="RefSeq" id="WP_012464311.1">
    <property type="nucleotide sequence ID" value="NC_010794.1"/>
</dbReference>
<dbReference type="SMR" id="B3DYI1"/>
<dbReference type="STRING" id="481448.Minf_1975"/>
<dbReference type="KEGG" id="min:Minf_1975"/>
<dbReference type="eggNOG" id="COG0290">
    <property type="taxonomic scope" value="Bacteria"/>
</dbReference>
<dbReference type="HOGENOM" id="CLU_054919_3_1_0"/>
<dbReference type="OrthoDB" id="9806014at2"/>
<dbReference type="Proteomes" id="UP000009149">
    <property type="component" value="Chromosome"/>
</dbReference>
<dbReference type="GO" id="GO:0005829">
    <property type="term" value="C:cytosol"/>
    <property type="evidence" value="ECO:0007669"/>
    <property type="project" value="TreeGrafter"/>
</dbReference>
<dbReference type="GO" id="GO:0016020">
    <property type="term" value="C:membrane"/>
    <property type="evidence" value="ECO:0007669"/>
    <property type="project" value="TreeGrafter"/>
</dbReference>
<dbReference type="GO" id="GO:0043022">
    <property type="term" value="F:ribosome binding"/>
    <property type="evidence" value="ECO:0007669"/>
    <property type="project" value="TreeGrafter"/>
</dbReference>
<dbReference type="GO" id="GO:0003743">
    <property type="term" value="F:translation initiation factor activity"/>
    <property type="evidence" value="ECO:0007669"/>
    <property type="project" value="UniProtKB-UniRule"/>
</dbReference>
<dbReference type="GO" id="GO:0032790">
    <property type="term" value="P:ribosome disassembly"/>
    <property type="evidence" value="ECO:0007669"/>
    <property type="project" value="TreeGrafter"/>
</dbReference>
<dbReference type="FunFam" id="3.10.20.80:FF:000001">
    <property type="entry name" value="Translation initiation factor IF-3"/>
    <property type="match status" value="1"/>
</dbReference>
<dbReference type="Gene3D" id="3.30.110.10">
    <property type="entry name" value="Translation initiation factor 3 (IF-3), C-terminal domain"/>
    <property type="match status" value="1"/>
</dbReference>
<dbReference type="Gene3D" id="3.10.20.80">
    <property type="entry name" value="Translation initiation factor 3 (IF-3), N-terminal domain"/>
    <property type="match status" value="1"/>
</dbReference>
<dbReference type="HAMAP" id="MF_00080">
    <property type="entry name" value="IF_3"/>
    <property type="match status" value="1"/>
</dbReference>
<dbReference type="InterPro" id="IPR036788">
    <property type="entry name" value="T_IF-3_C_sf"/>
</dbReference>
<dbReference type="InterPro" id="IPR036787">
    <property type="entry name" value="T_IF-3_N_sf"/>
</dbReference>
<dbReference type="InterPro" id="IPR001288">
    <property type="entry name" value="Translation_initiation_fac_3"/>
</dbReference>
<dbReference type="InterPro" id="IPR019815">
    <property type="entry name" value="Translation_initiation_fac_3_C"/>
</dbReference>
<dbReference type="InterPro" id="IPR019814">
    <property type="entry name" value="Translation_initiation_fac_3_N"/>
</dbReference>
<dbReference type="NCBIfam" id="TIGR00168">
    <property type="entry name" value="infC"/>
    <property type="match status" value="1"/>
</dbReference>
<dbReference type="PANTHER" id="PTHR10938">
    <property type="entry name" value="TRANSLATION INITIATION FACTOR IF-3"/>
    <property type="match status" value="1"/>
</dbReference>
<dbReference type="PANTHER" id="PTHR10938:SF0">
    <property type="entry name" value="TRANSLATION INITIATION FACTOR IF-3, MITOCHONDRIAL"/>
    <property type="match status" value="1"/>
</dbReference>
<dbReference type="Pfam" id="PF00707">
    <property type="entry name" value="IF3_C"/>
    <property type="match status" value="1"/>
</dbReference>
<dbReference type="Pfam" id="PF05198">
    <property type="entry name" value="IF3_N"/>
    <property type="match status" value="1"/>
</dbReference>
<dbReference type="SUPFAM" id="SSF55200">
    <property type="entry name" value="Translation initiation factor IF3, C-terminal domain"/>
    <property type="match status" value="1"/>
</dbReference>
<dbReference type="SUPFAM" id="SSF54364">
    <property type="entry name" value="Translation initiation factor IF3, N-terminal domain"/>
    <property type="match status" value="1"/>
</dbReference>
<proteinExistence type="inferred from homology"/>
<name>IF3_METI4</name>
<accession>B3DYI1</accession>
<comment type="function">
    <text evidence="1">IF-3 binds to the 30S ribosomal subunit and shifts the equilibrium between 70S ribosomes and their 50S and 30S subunits in favor of the free subunits, thus enhancing the availability of 30S subunits on which protein synthesis initiation begins.</text>
</comment>
<comment type="subunit">
    <text evidence="1">Monomer.</text>
</comment>
<comment type="subcellular location">
    <subcellularLocation>
        <location evidence="1">Cytoplasm</location>
    </subcellularLocation>
</comment>
<comment type="similarity">
    <text evidence="1">Belongs to the IF-3 family.</text>
</comment>
<feature type="chain" id="PRO_1000117102" description="Translation initiation factor IF-3">
    <location>
        <begin position="1"/>
        <end position="217"/>
    </location>
</feature>
<feature type="region of interest" description="Disordered" evidence="2">
    <location>
        <begin position="185"/>
        <end position="217"/>
    </location>
</feature>
<feature type="compositionally biased region" description="Basic and acidic residues" evidence="2">
    <location>
        <begin position="191"/>
        <end position="217"/>
    </location>
</feature>